<gene>
    <name evidence="1" type="primary">leuS</name>
    <name type="ordered locus">A1C_03160</name>
</gene>
<proteinExistence type="inferred from homology"/>
<comment type="catalytic activity">
    <reaction evidence="1">
        <text>tRNA(Leu) + L-leucine + ATP = L-leucyl-tRNA(Leu) + AMP + diphosphate</text>
        <dbReference type="Rhea" id="RHEA:11688"/>
        <dbReference type="Rhea" id="RHEA-COMP:9613"/>
        <dbReference type="Rhea" id="RHEA-COMP:9622"/>
        <dbReference type="ChEBI" id="CHEBI:30616"/>
        <dbReference type="ChEBI" id="CHEBI:33019"/>
        <dbReference type="ChEBI" id="CHEBI:57427"/>
        <dbReference type="ChEBI" id="CHEBI:78442"/>
        <dbReference type="ChEBI" id="CHEBI:78494"/>
        <dbReference type="ChEBI" id="CHEBI:456215"/>
        <dbReference type="EC" id="6.1.1.4"/>
    </reaction>
</comment>
<comment type="subcellular location">
    <subcellularLocation>
        <location evidence="1">Cytoplasm</location>
    </subcellularLocation>
</comment>
<comment type="similarity">
    <text evidence="1">Belongs to the class-I aminoacyl-tRNA synthetase family.</text>
</comment>
<dbReference type="EC" id="6.1.1.4" evidence="1"/>
<dbReference type="EMBL" id="CP000847">
    <property type="protein sequence ID" value="ABV74918.1"/>
    <property type="molecule type" value="Genomic_DNA"/>
</dbReference>
<dbReference type="RefSeq" id="WP_012149551.1">
    <property type="nucleotide sequence ID" value="NC_009881.1"/>
</dbReference>
<dbReference type="SMR" id="A8GNE3"/>
<dbReference type="STRING" id="293614.A1C_03160"/>
<dbReference type="KEGG" id="rak:A1C_03160"/>
<dbReference type="eggNOG" id="COG0495">
    <property type="taxonomic scope" value="Bacteria"/>
</dbReference>
<dbReference type="HOGENOM" id="CLU_004427_0_0_5"/>
<dbReference type="Proteomes" id="UP000006830">
    <property type="component" value="Chromosome"/>
</dbReference>
<dbReference type="GO" id="GO:0005737">
    <property type="term" value="C:cytoplasm"/>
    <property type="evidence" value="ECO:0007669"/>
    <property type="project" value="UniProtKB-SubCell"/>
</dbReference>
<dbReference type="GO" id="GO:0002161">
    <property type="term" value="F:aminoacyl-tRNA deacylase activity"/>
    <property type="evidence" value="ECO:0007669"/>
    <property type="project" value="InterPro"/>
</dbReference>
<dbReference type="GO" id="GO:0005524">
    <property type="term" value="F:ATP binding"/>
    <property type="evidence" value="ECO:0007669"/>
    <property type="project" value="UniProtKB-UniRule"/>
</dbReference>
<dbReference type="GO" id="GO:0004823">
    <property type="term" value="F:leucine-tRNA ligase activity"/>
    <property type="evidence" value="ECO:0007669"/>
    <property type="project" value="UniProtKB-UniRule"/>
</dbReference>
<dbReference type="GO" id="GO:0006429">
    <property type="term" value="P:leucyl-tRNA aminoacylation"/>
    <property type="evidence" value="ECO:0007669"/>
    <property type="project" value="UniProtKB-UniRule"/>
</dbReference>
<dbReference type="CDD" id="cd07958">
    <property type="entry name" value="Anticodon_Ia_Leu_BEm"/>
    <property type="match status" value="1"/>
</dbReference>
<dbReference type="CDD" id="cd00812">
    <property type="entry name" value="LeuRS_core"/>
    <property type="match status" value="1"/>
</dbReference>
<dbReference type="FunFam" id="1.10.730.10:FF:000002">
    <property type="entry name" value="Leucine--tRNA ligase"/>
    <property type="match status" value="1"/>
</dbReference>
<dbReference type="FunFam" id="3.40.50.620:FF:000003">
    <property type="entry name" value="Leucine--tRNA ligase"/>
    <property type="match status" value="1"/>
</dbReference>
<dbReference type="FunFam" id="3.40.50.620:FF:000051">
    <property type="entry name" value="Leucine--tRNA ligase"/>
    <property type="match status" value="1"/>
</dbReference>
<dbReference type="Gene3D" id="2.20.28.290">
    <property type="match status" value="1"/>
</dbReference>
<dbReference type="Gene3D" id="3.10.20.590">
    <property type="match status" value="1"/>
</dbReference>
<dbReference type="Gene3D" id="3.40.50.620">
    <property type="entry name" value="HUPs"/>
    <property type="match status" value="2"/>
</dbReference>
<dbReference type="Gene3D" id="1.10.730.10">
    <property type="entry name" value="Isoleucyl-tRNA Synthetase, Domain 1"/>
    <property type="match status" value="1"/>
</dbReference>
<dbReference type="HAMAP" id="MF_00049_B">
    <property type="entry name" value="Leu_tRNA_synth_B"/>
    <property type="match status" value="1"/>
</dbReference>
<dbReference type="InterPro" id="IPR001412">
    <property type="entry name" value="aa-tRNA-synth_I_CS"/>
</dbReference>
<dbReference type="InterPro" id="IPR002300">
    <property type="entry name" value="aa-tRNA-synth_Ia"/>
</dbReference>
<dbReference type="InterPro" id="IPR002302">
    <property type="entry name" value="Leu-tRNA-ligase"/>
</dbReference>
<dbReference type="InterPro" id="IPR025709">
    <property type="entry name" value="Leu_tRNA-synth_edit"/>
</dbReference>
<dbReference type="InterPro" id="IPR013155">
    <property type="entry name" value="M/V/L/I-tRNA-synth_anticd-bd"/>
</dbReference>
<dbReference type="InterPro" id="IPR015413">
    <property type="entry name" value="Methionyl/Leucyl_tRNA_Synth"/>
</dbReference>
<dbReference type="InterPro" id="IPR014729">
    <property type="entry name" value="Rossmann-like_a/b/a_fold"/>
</dbReference>
<dbReference type="InterPro" id="IPR005728">
    <property type="entry name" value="RPE1"/>
</dbReference>
<dbReference type="InterPro" id="IPR009080">
    <property type="entry name" value="tRNAsynth_Ia_anticodon-bd"/>
</dbReference>
<dbReference type="InterPro" id="IPR009008">
    <property type="entry name" value="Val/Leu/Ile-tRNA-synth_edit"/>
</dbReference>
<dbReference type="NCBIfam" id="TIGR00396">
    <property type="entry name" value="leuS_bact"/>
    <property type="match status" value="1"/>
</dbReference>
<dbReference type="NCBIfam" id="TIGR01045">
    <property type="entry name" value="RPE1"/>
    <property type="match status" value="1"/>
</dbReference>
<dbReference type="PANTHER" id="PTHR43740:SF2">
    <property type="entry name" value="LEUCINE--TRNA LIGASE, MITOCHONDRIAL"/>
    <property type="match status" value="1"/>
</dbReference>
<dbReference type="PANTHER" id="PTHR43740">
    <property type="entry name" value="LEUCYL-TRNA SYNTHETASE"/>
    <property type="match status" value="1"/>
</dbReference>
<dbReference type="Pfam" id="PF08264">
    <property type="entry name" value="Anticodon_1"/>
    <property type="match status" value="1"/>
</dbReference>
<dbReference type="Pfam" id="PF00133">
    <property type="entry name" value="tRNA-synt_1"/>
    <property type="match status" value="2"/>
</dbReference>
<dbReference type="Pfam" id="PF13603">
    <property type="entry name" value="tRNA-synt_1_2"/>
    <property type="match status" value="1"/>
</dbReference>
<dbReference type="Pfam" id="PF09334">
    <property type="entry name" value="tRNA-synt_1g"/>
    <property type="match status" value="1"/>
</dbReference>
<dbReference type="PRINTS" id="PR00985">
    <property type="entry name" value="TRNASYNTHLEU"/>
</dbReference>
<dbReference type="SUPFAM" id="SSF47323">
    <property type="entry name" value="Anticodon-binding domain of a subclass of class I aminoacyl-tRNA synthetases"/>
    <property type="match status" value="1"/>
</dbReference>
<dbReference type="SUPFAM" id="SSF52374">
    <property type="entry name" value="Nucleotidylyl transferase"/>
    <property type="match status" value="1"/>
</dbReference>
<dbReference type="SUPFAM" id="SSF50677">
    <property type="entry name" value="ValRS/IleRS/LeuRS editing domain"/>
    <property type="match status" value="1"/>
</dbReference>
<dbReference type="PROSITE" id="PS00178">
    <property type="entry name" value="AA_TRNA_LIGASE_I"/>
    <property type="match status" value="1"/>
</dbReference>
<organism>
    <name type="scientific">Rickettsia akari (strain Hartford)</name>
    <dbReference type="NCBI Taxonomy" id="293614"/>
    <lineage>
        <taxon>Bacteria</taxon>
        <taxon>Pseudomonadati</taxon>
        <taxon>Pseudomonadota</taxon>
        <taxon>Alphaproteobacteria</taxon>
        <taxon>Rickettsiales</taxon>
        <taxon>Rickettsiaceae</taxon>
        <taxon>Rickettsieae</taxon>
        <taxon>Rickettsia</taxon>
        <taxon>spotted fever group</taxon>
    </lineage>
</organism>
<protein>
    <recommendedName>
        <fullName evidence="1">Leucine--tRNA ligase</fullName>
        <ecNumber evidence="1">6.1.1.4</ecNumber>
    </recommendedName>
    <alternativeName>
        <fullName evidence="1">Leucyl-tRNA synthetase</fullName>
        <shortName evidence="1">LeuRS</shortName>
    </alternativeName>
</protein>
<sequence>MNQIEQKWQQIWHDEKAFEVSNESSKPKYYVLAMLPYPSGKIHLGHVRNYSIGDVIARFMTMQGFNVLHPMGWDAFGLPAENAAIKNNSHPKDWTYSNIENMKKQLKSMGFSYAWSREINSCDPQYYKHEQKFFLELYERNLAYQKESLVNWDPVDNTVLANEQVVDGRGWRSGAVVEKRYLKQWFLKITDYAEELLNEIQNLKEWPEAVRSMQEKWIGKSIGANFHFKIKDNEDTTIEVFSTKPETIFGAGFIGIAFNHPIIERLVSKTPEISNFIAKCANITCSVELDKAEKEGVFTGLYVTHPFDSNIVLPVIITNFVLMDYGTGAVFGCPAHDERDHELAVKMNLTIKKVIETDIDVQKTPYTEDGILVNSNFLNGLTSNEAKQKVIEEFEKLEIGKCTINYRLKDWGISRQRFWGCPIPMIHCEACGIVPVPYKDLPVTLPDDVSFDGHGNPLAHHPSWKHVNCPKCNKPAIRETDTFDTFFESSWYFTRYCNSNATEMTDKKACDYWLPVDKYIGGIEHAVMHLLYARFFTKVMNEQHYVSVREPFKGLFTQGMVLHATYKDEHNNWLYPEEVVKKGNEFFRKESNDRVVQGRIEKMSKSKKNLIDLETMQKQYGADAIRLFVLSDSPPEKDLEWFVSGIEGCSRFINKLEQMFEAIKFLYNEANKEEFEGNTERSTAAYTLVREDASTGSMYKLPLEASYINKELNRLVHFTIKHVAEDIKHFALNRAIARMRELANAISSEISKDKIDVNTVRHGFNILVQLLNPFIPHITEEIWQKLGNKERLYKSDFPAFDESMLELDTYIMAVQVNGKLRDTYKFKTAASEDAIKQITVNLPKVQKFLAGKEPKKIILVPRKIVNIIVN</sequence>
<name>SYL_RICAH</name>
<reference key="1">
    <citation type="submission" date="2007-09" db="EMBL/GenBank/DDBJ databases">
        <title>Complete genome sequence of Rickettsia akari.</title>
        <authorList>
            <person name="Madan A."/>
            <person name="Fahey J."/>
            <person name="Helton E."/>
            <person name="Ketteman M."/>
            <person name="Madan A."/>
            <person name="Rodrigues S."/>
            <person name="Sanchez A."/>
            <person name="Whiting M."/>
            <person name="Dasch G."/>
            <person name="Eremeeva M."/>
        </authorList>
    </citation>
    <scope>NUCLEOTIDE SEQUENCE [LARGE SCALE GENOMIC DNA]</scope>
    <source>
        <strain>Hartford</strain>
    </source>
</reference>
<feature type="chain" id="PRO_1000009416" description="Leucine--tRNA ligase">
    <location>
        <begin position="1"/>
        <end position="870"/>
    </location>
</feature>
<feature type="short sequence motif" description="'HIGH' region">
    <location>
        <begin position="36"/>
        <end position="46"/>
    </location>
</feature>
<feature type="short sequence motif" description="'KMSKS' region">
    <location>
        <begin position="602"/>
        <end position="606"/>
    </location>
</feature>
<feature type="binding site" evidence="1">
    <location>
        <position position="605"/>
    </location>
    <ligand>
        <name>ATP</name>
        <dbReference type="ChEBI" id="CHEBI:30616"/>
    </ligand>
</feature>
<keyword id="KW-0030">Aminoacyl-tRNA synthetase</keyword>
<keyword id="KW-0067">ATP-binding</keyword>
<keyword id="KW-0963">Cytoplasm</keyword>
<keyword id="KW-0436">Ligase</keyword>
<keyword id="KW-0547">Nucleotide-binding</keyword>
<keyword id="KW-0648">Protein biosynthesis</keyword>
<accession>A8GNE3</accession>
<evidence type="ECO:0000255" key="1">
    <source>
        <dbReference type="HAMAP-Rule" id="MF_00049"/>
    </source>
</evidence>